<reference key="1">
    <citation type="journal article" date="2000" name="Nature">
        <title>Sequence and analysis of chromosome 1 of the plant Arabidopsis thaliana.</title>
        <authorList>
            <person name="Theologis A."/>
            <person name="Ecker J.R."/>
            <person name="Palm C.J."/>
            <person name="Federspiel N.A."/>
            <person name="Kaul S."/>
            <person name="White O."/>
            <person name="Alonso J."/>
            <person name="Altafi H."/>
            <person name="Araujo R."/>
            <person name="Bowman C.L."/>
            <person name="Brooks S.Y."/>
            <person name="Buehler E."/>
            <person name="Chan A."/>
            <person name="Chao Q."/>
            <person name="Chen H."/>
            <person name="Cheuk R.F."/>
            <person name="Chin C.W."/>
            <person name="Chung M.K."/>
            <person name="Conn L."/>
            <person name="Conway A.B."/>
            <person name="Conway A.R."/>
            <person name="Creasy T.H."/>
            <person name="Dewar K."/>
            <person name="Dunn P."/>
            <person name="Etgu P."/>
            <person name="Feldblyum T.V."/>
            <person name="Feng J.-D."/>
            <person name="Fong B."/>
            <person name="Fujii C.Y."/>
            <person name="Gill J.E."/>
            <person name="Goldsmith A.D."/>
            <person name="Haas B."/>
            <person name="Hansen N.F."/>
            <person name="Hughes B."/>
            <person name="Huizar L."/>
            <person name="Hunter J.L."/>
            <person name="Jenkins J."/>
            <person name="Johnson-Hopson C."/>
            <person name="Khan S."/>
            <person name="Khaykin E."/>
            <person name="Kim C.J."/>
            <person name="Koo H.L."/>
            <person name="Kremenetskaia I."/>
            <person name="Kurtz D.B."/>
            <person name="Kwan A."/>
            <person name="Lam B."/>
            <person name="Langin-Hooper S."/>
            <person name="Lee A."/>
            <person name="Lee J.M."/>
            <person name="Lenz C.A."/>
            <person name="Li J.H."/>
            <person name="Li Y.-P."/>
            <person name="Lin X."/>
            <person name="Liu S.X."/>
            <person name="Liu Z.A."/>
            <person name="Luros J.S."/>
            <person name="Maiti R."/>
            <person name="Marziali A."/>
            <person name="Militscher J."/>
            <person name="Miranda M."/>
            <person name="Nguyen M."/>
            <person name="Nierman W.C."/>
            <person name="Osborne B.I."/>
            <person name="Pai G."/>
            <person name="Peterson J."/>
            <person name="Pham P.K."/>
            <person name="Rizzo M."/>
            <person name="Rooney T."/>
            <person name="Rowley D."/>
            <person name="Sakano H."/>
            <person name="Salzberg S.L."/>
            <person name="Schwartz J.R."/>
            <person name="Shinn P."/>
            <person name="Southwick A.M."/>
            <person name="Sun H."/>
            <person name="Tallon L.J."/>
            <person name="Tambunga G."/>
            <person name="Toriumi M.J."/>
            <person name="Town C.D."/>
            <person name="Utterback T."/>
            <person name="Van Aken S."/>
            <person name="Vaysberg M."/>
            <person name="Vysotskaia V.S."/>
            <person name="Walker M."/>
            <person name="Wu D."/>
            <person name="Yu G."/>
            <person name="Fraser C.M."/>
            <person name="Venter J.C."/>
            <person name="Davis R.W."/>
        </authorList>
    </citation>
    <scope>NUCLEOTIDE SEQUENCE [LARGE SCALE GENOMIC DNA]</scope>
    <source>
        <strain>cv. Columbia</strain>
    </source>
</reference>
<reference key="2">
    <citation type="journal article" date="2017" name="Plant J.">
        <title>Araport11: a complete reannotation of the Arabidopsis thaliana reference genome.</title>
        <authorList>
            <person name="Cheng C.Y."/>
            <person name="Krishnakumar V."/>
            <person name="Chan A.P."/>
            <person name="Thibaud-Nissen F."/>
            <person name="Schobel S."/>
            <person name="Town C.D."/>
        </authorList>
    </citation>
    <scope>GENOME REANNOTATION</scope>
    <source>
        <strain>cv. Columbia</strain>
    </source>
</reference>
<reference key="3">
    <citation type="journal article" date="2003" name="Science">
        <title>Empirical analysis of transcriptional activity in the Arabidopsis genome.</title>
        <authorList>
            <person name="Yamada K."/>
            <person name="Lim J."/>
            <person name="Dale J.M."/>
            <person name="Chen H."/>
            <person name="Shinn P."/>
            <person name="Palm C.J."/>
            <person name="Southwick A.M."/>
            <person name="Wu H.C."/>
            <person name="Kim C.J."/>
            <person name="Nguyen M."/>
            <person name="Pham P.K."/>
            <person name="Cheuk R.F."/>
            <person name="Karlin-Newmann G."/>
            <person name="Liu S.X."/>
            <person name="Lam B."/>
            <person name="Sakano H."/>
            <person name="Wu T."/>
            <person name="Yu G."/>
            <person name="Miranda M."/>
            <person name="Quach H.L."/>
            <person name="Tripp M."/>
            <person name="Chang C.H."/>
            <person name="Lee J.M."/>
            <person name="Toriumi M.J."/>
            <person name="Chan M.M."/>
            <person name="Tang C.C."/>
            <person name="Onodera C.S."/>
            <person name="Deng J.M."/>
            <person name="Akiyama K."/>
            <person name="Ansari Y."/>
            <person name="Arakawa T."/>
            <person name="Banh J."/>
            <person name="Banno F."/>
            <person name="Bowser L."/>
            <person name="Brooks S.Y."/>
            <person name="Carninci P."/>
            <person name="Chao Q."/>
            <person name="Choy N."/>
            <person name="Enju A."/>
            <person name="Goldsmith A.D."/>
            <person name="Gurjal M."/>
            <person name="Hansen N.F."/>
            <person name="Hayashizaki Y."/>
            <person name="Johnson-Hopson C."/>
            <person name="Hsuan V.W."/>
            <person name="Iida K."/>
            <person name="Karnes M."/>
            <person name="Khan S."/>
            <person name="Koesema E."/>
            <person name="Ishida J."/>
            <person name="Jiang P.X."/>
            <person name="Jones T."/>
            <person name="Kawai J."/>
            <person name="Kamiya A."/>
            <person name="Meyers C."/>
            <person name="Nakajima M."/>
            <person name="Narusaka M."/>
            <person name="Seki M."/>
            <person name="Sakurai T."/>
            <person name="Satou M."/>
            <person name="Tamse R."/>
            <person name="Vaysberg M."/>
            <person name="Wallender E.K."/>
            <person name="Wong C."/>
            <person name="Yamamura Y."/>
            <person name="Yuan S."/>
            <person name="Shinozaki K."/>
            <person name="Davis R.W."/>
            <person name="Theologis A."/>
            <person name="Ecker J.R."/>
        </authorList>
    </citation>
    <scope>NUCLEOTIDE SEQUENCE [LARGE SCALE MRNA]</scope>
    <source>
        <strain>cv. Columbia</strain>
    </source>
</reference>
<reference key="4">
    <citation type="submission" date="2006-07" db="EMBL/GenBank/DDBJ databases">
        <title>Large-scale analysis of RIKEN Arabidopsis full-length (RAFL) cDNAs.</title>
        <authorList>
            <person name="Totoki Y."/>
            <person name="Seki M."/>
            <person name="Ishida J."/>
            <person name="Nakajima M."/>
            <person name="Enju A."/>
            <person name="Kamiya A."/>
            <person name="Narusaka M."/>
            <person name="Shin-i T."/>
            <person name="Nakagawa M."/>
            <person name="Sakamoto N."/>
            <person name="Oishi K."/>
            <person name="Kohara Y."/>
            <person name="Kobayashi M."/>
            <person name="Toyoda A."/>
            <person name="Sakaki Y."/>
            <person name="Sakurai T."/>
            <person name="Iida K."/>
            <person name="Akiyama K."/>
            <person name="Satou M."/>
            <person name="Toyoda T."/>
            <person name="Konagaya A."/>
            <person name="Carninci P."/>
            <person name="Kawai J."/>
            <person name="Hayashizaki Y."/>
            <person name="Shinozaki K."/>
        </authorList>
    </citation>
    <scope>NUCLEOTIDE SEQUENCE [LARGE SCALE MRNA]</scope>
    <source>
        <strain>cv. Columbia</strain>
    </source>
</reference>
<reference key="5">
    <citation type="submission" date="2002-03" db="EMBL/GenBank/DDBJ databases">
        <title>Full-length cDNA from Arabidopsis thaliana.</title>
        <authorList>
            <person name="Brover V.V."/>
            <person name="Troukhan M.E."/>
            <person name="Alexandrov N.A."/>
            <person name="Lu Y.-P."/>
            <person name="Flavell R.B."/>
            <person name="Feldmann K.A."/>
        </authorList>
    </citation>
    <scope>NUCLEOTIDE SEQUENCE [LARGE SCALE MRNA]</scope>
</reference>
<reference key="6">
    <citation type="journal article" date="2002" name="Nucleic Acids Res.">
        <title>Genome analysis: RNA recognition motif (RRM) and K homology (KH) domain RNA-binding proteins from the flowering plant Arabidopsis thaliana.</title>
        <authorList>
            <person name="Lorkovic Z.J."/>
            <person name="Barta A."/>
        </authorList>
    </citation>
    <scope>GENE FAMILY</scope>
</reference>
<reference key="7">
    <citation type="journal article" date="2005" name="J. Exp. Bot.">
        <title>Characterization of transgenic Arabidopsis plants overexpressing GR-RBP4 under high salinity, dehydration, or cold stress.</title>
        <authorList>
            <person name="Kwak K.J."/>
            <person name="Kim Y.O."/>
            <person name="Kang H."/>
        </authorList>
    </citation>
    <scope>INDUCTION BY SALT</scope>
</reference>
<reference key="8">
    <citation type="journal article" date="2010" name="Plant Signal. Behav.">
        <title>Functional diversity of the plant glycine-rich proteins superfamily.</title>
        <authorList>
            <person name="Mangeon A."/>
            <person name="Junqueira R.M."/>
            <person name="Sachetto-Martins G."/>
        </authorList>
    </citation>
    <scope>NOMENCLATURE</scope>
</reference>
<reference key="9">
    <citation type="journal article" date="2023" name="Plant Cell">
        <title>An updated nomenclature for plant ribosomal protein genes.</title>
        <authorList>
            <person name="Scarpin M.R."/>
            <person name="Busche M."/>
            <person name="Martinez R.E."/>
            <person name="Harper L.C."/>
            <person name="Reiser L."/>
            <person name="Szakonyi D."/>
            <person name="Merchante C."/>
            <person name="Lan T."/>
            <person name="Xiong W."/>
            <person name="Mo B."/>
            <person name="Tang G."/>
            <person name="Chen X."/>
            <person name="Bailey-Serres J."/>
            <person name="Browning K.S."/>
            <person name="Brunkard J.O."/>
        </authorList>
    </citation>
    <scope>NOMENCLATURE</scope>
</reference>
<accession>Q9FZ84</accession>
<accession>Q8LEL7</accession>
<organism>
    <name type="scientific">Arabidopsis thaliana</name>
    <name type="common">Mouse-ear cress</name>
    <dbReference type="NCBI Taxonomy" id="3702"/>
    <lineage>
        <taxon>Eukaryota</taxon>
        <taxon>Viridiplantae</taxon>
        <taxon>Streptophyta</taxon>
        <taxon>Embryophyta</taxon>
        <taxon>Tracheophyta</taxon>
        <taxon>Spermatophyta</taxon>
        <taxon>Magnoliopsida</taxon>
        <taxon>eudicotyledons</taxon>
        <taxon>Gunneridae</taxon>
        <taxon>Pentapetalae</taxon>
        <taxon>rosids</taxon>
        <taxon>malvids</taxon>
        <taxon>Brassicales</taxon>
        <taxon>Brassicaceae</taxon>
        <taxon>Camelineae</taxon>
        <taxon>Arabidopsis</taxon>
    </lineage>
</organism>
<keyword id="KW-0496">Mitochondrion</keyword>
<keyword id="KW-1185">Reference proteome</keyword>
<keyword id="KW-0687">Ribonucleoprotein</keyword>
<keyword id="KW-0689">Ribosomal protein</keyword>
<keyword id="KW-0694">RNA-binding</keyword>
<keyword id="KW-0809">Transit peptide</keyword>
<name>RBG6_ARATH</name>
<proteinExistence type="evidence at transcript level"/>
<evidence type="ECO:0000250" key="1"/>
<evidence type="ECO:0000255" key="2"/>
<evidence type="ECO:0000255" key="3">
    <source>
        <dbReference type="PROSITE-ProRule" id="PRU00176"/>
    </source>
</evidence>
<evidence type="ECO:0000269" key="4">
    <source>
    </source>
</evidence>
<evidence type="ECO:0000303" key="5">
    <source>
    </source>
</evidence>
<evidence type="ECO:0000305" key="6"/>
<comment type="function">
    <text evidence="1">Possibly has a role in RNA transcription or processing during stress.</text>
</comment>
<comment type="subunit">
    <text evidence="6">Component of the mitochondrial ribosome small subunit.</text>
</comment>
<comment type="subcellular location">
    <subcellularLocation>
        <location evidence="1 5">Mitochondrion</location>
    </subcellularLocation>
</comment>
<comment type="induction">
    <text evidence="4">Down-regulated by salt stress.</text>
</comment>
<comment type="similarity">
    <text evidence="6">Belongs to the GR-RBP family.</text>
</comment>
<comment type="sequence caution" evidence="6">
    <conflict type="erroneous initiation">
        <sequence resource="EMBL-CDS" id="AAM62588"/>
    </conflict>
    <text>Truncated N-terminus.</text>
</comment>
<dbReference type="EMBL" id="AC026238">
    <property type="protein sequence ID" value="AAF98412.1"/>
    <property type="molecule type" value="Genomic_DNA"/>
</dbReference>
<dbReference type="EMBL" id="CP002684">
    <property type="protein sequence ID" value="AEE29737.1"/>
    <property type="molecule type" value="Genomic_DNA"/>
</dbReference>
<dbReference type="EMBL" id="BT005999">
    <property type="protein sequence ID" value="AAO64934.1"/>
    <property type="molecule type" value="mRNA"/>
</dbReference>
<dbReference type="EMBL" id="AK227482">
    <property type="protein sequence ID" value="BAE99483.1"/>
    <property type="molecule type" value="mRNA"/>
</dbReference>
<dbReference type="EMBL" id="AY085358">
    <property type="protein sequence ID" value="AAM62588.1"/>
    <property type="status" value="ALT_INIT"/>
    <property type="molecule type" value="mRNA"/>
</dbReference>
<dbReference type="PIR" id="A86320">
    <property type="entry name" value="A86320"/>
</dbReference>
<dbReference type="RefSeq" id="NP_173298.1">
    <property type="nucleotide sequence ID" value="NM_101721.4"/>
</dbReference>
<dbReference type="SMR" id="Q9FZ84"/>
<dbReference type="BioGRID" id="23683">
    <property type="interactions" value="1"/>
</dbReference>
<dbReference type="FunCoup" id="Q9FZ84">
    <property type="interactions" value="534"/>
</dbReference>
<dbReference type="IntAct" id="Q9FZ84">
    <property type="interactions" value="1"/>
</dbReference>
<dbReference type="STRING" id="3702.Q9FZ84"/>
<dbReference type="PaxDb" id="3702-AT1G18630.1"/>
<dbReference type="ProteomicsDB" id="236521"/>
<dbReference type="EnsemblPlants" id="AT1G18630.1">
    <property type="protein sequence ID" value="AT1G18630.1"/>
    <property type="gene ID" value="AT1G18630"/>
</dbReference>
<dbReference type="GeneID" id="838444"/>
<dbReference type="Gramene" id="AT1G18630.1">
    <property type="protein sequence ID" value="AT1G18630.1"/>
    <property type="gene ID" value="AT1G18630"/>
</dbReference>
<dbReference type="KEGG" id="ath:AT1G18630"/>
<dbReference type="Araport" id="AT1G18630"/>
<dbReference type="TAIR" id="AT1G18630">
    <property type="gene designation" value="RBGA1"/>
</dbReference>
<dbReference type="eggNOG" id="KOG0118">
    <property type="taxonomic scope" value="Eukaryota"/>
</dbReference>
<dbReference type="HOGENOM" id="CLU_012062_28_4_1"/>
<dbReference type="InParanoid" id="Q9FZ84"/>
<dbReference type="OMA" id="ANNAMQA"/>
<dbReference type="OrthoDB" id="439808at2759"/>
<dbReference type="PhylomeDB" id="Q9FZ84"/>
<dbReference type="PRO" id="PR:Q9FZ84"/>
<dbReference type="Proteomes" id="UP000006548">
    <property type="component" value="Chromosome 1"/>
</dbReference>
<dbReference type="ExpressionAtlas" id="Q9FZ84">
    <property type="expression patterns" value="baseline and differential"/>
</dbReference>
<dbReference type="GO" id="GO:0005768">
    <property type="term" value="C:endosome"/>
    <property type="evidence" value="ECO:0007005"/>
    <property type="project" value="TAIR"/>
</dbReference>
<dbReference type="GO" id="GO:0005794">
    <property type="term" value="C:Golgi apparatus"/>
    <property type="evidence" value="ECO:0007005"/>
    <property type="project" value="TAIR"/>
</dbReference>
<dbReference type="GO" id="GO:0005739">
    <property type="term" value="C:mitochondrion"/>
    <property type="evidence" value="ECO:0007669"/>
    <property type="project" value="UniProtKB-SubCell"/>
</dbReference>
<dbReference type="GO" id="GO:0005634">
    <property type="term" value="C:nucleus"/>
    <property type="evidence" value="ECO:0007005"/>
    <property type="project" value="TAIR"/>
</dbReference>
<dbReference type="GO" id="GO:1990904">
    <property type="term" value="C:ribonucleoprotein complex"/>
    <property type="evidence" value="ECO:0007669"/>
    <property type="project" value="UniProtKB-KW"/>
</dbReference>
<dbReference type="GO" id="GO:0005840">
    <property type="term" value="C:ribosome"/>
    <property type="evidence" value="ECO:0007669"/>
    <property type="project" value="UniProtKB-KW"/>
</dbReference>
<dbReference type="GO" id="GO:0005802">
    <property type="term" value="C:trans-Golgi network"/>
    <property type="evidence" value="ECO:0007005"/>
    <property type="project" value="TAIR"/>
</dbReference>
<dbReference type="GO" id="GO:0003729">
    <property type="term" value="F:mRNA binding"/>
    <property type="evidence" value="ECO:0000314"/>
    <property type="project" value="TAIR"/>
</dbReference>
<dbReference type="GO" id="GO:0009651">
    <property type="term" value="P:response to salt stress"/>
    <property type="evidence" value="ECO:0000270"/>
    <property type="project" value="UniProtKB"/>
</dbReference>
<dbReference type="Gene3D" id="3.30.70.330">
    <property type="match status" value="1"/>
</dbReference>
<dbReference type="InterPro" id="IPR012677">
    <property type="entry name" value="Nucleotide-bd_a/b_plait_sf"/>
</dbReference>
<dbReference type="InterPro" id="IPR035979">
    <property type="entry name" value="RBD_domain_sf"/>
</dbReference>
<dbReference type="InterPro" id="IPR000504">
    <property type="entry name" value="RRM_dom"/>
</dbReference>
<dbReference type="InterPro" id="IPR052462">
    <property type="entry name" value="SLIRP/GR-RBP-like"/>
</dbReference>
<dbReference type="PANTHER" id="PTHR48027">
    <property type="entry name" value="HETEROGENEOUS NUCLEAR RIBONUCLEOPROTEIN 87F-RELATED"/>
    <property type="match status" value="1"/>
</dbReference>
<dbReference type="Pfam" id="PF00076">
    <property type="entry name" value="RRM_1"/>
    <property type="match status" value="1"/>
</dbReference>
<dbReference type="SMART" id="SM00360">
    <property type="entry name" value="RRM"/>
    <property type="match status" value="1"/>
</dbReference>
<dbReference type="SUPFAM" id="SSF54928">
    <property type="entry name" value="RNA-binding domain, RBD"/>
    <property type="match status" value="1"/>
</dbReference>
<dbReference type="PROSITE" id="PS50102">
    <property type="entry name" value="RRM"/>
    <property type="match status" value="1"/>
</dbReference>
<gene>
    <name type="primary">RBG6</name>
    <name type="synonym">GR-RBP6</name>
    <name type="ordered locus">At1g18630</name>
    <name type="ORF">F26I16.3</name>
</gene>
<sequence length="155" mass="15960">MHYMGLFSRAGNIFRQPRALQASNAMLQGNLSLTPSKIFVGGLSPSTDVELLKEAFGSFGKIVDAVVVLDRESGLSRGFGFVTYDSIEVANNAMQAMQNKELDGRIIGVHPADSGGGGGGGGFARRGGYGGGRGGYARGGFGRGGFGGGGYGFVR</sequence>
<protein>
    <recommendedName>
        <fullName evidence="5">Small ribosomal subunit protein mS86</fullName>
    </recommendedName>
    <alternativeName>
        <fullName>AtRBG6</fullName>
    </alternativeName>
    <alternativeName>
        <fullName>Glycine-rich RNA-binding protein 6, mitochondrial</fullName>
        <shortName>AtGR-RBP6</shortName>
    </alternativeName>
</protein>
<feature type="transit peptide" description="Mitochondrion" evidence="2">
    <location>
        <begin position="1"/>
        <end position="27"/>
    </location>
</feature>
<feature type="chain" id="PRO_0000421677" description="Small ribosomal subunit protein mS86">
    <location>
        <begin position="28"/>
        <end position="155"/>
    </location>
</feature>
<feature type="domain" description="RRM" evidence="3">
    <location>
        <begin position="36"/>
        <end position="114"/>
    </location>
</feature>